<evidence type="ECO:0000255" key="1">
    <source>
        <dbReference type="PROSITE-ProRule" id="PRU10023"/>
    </source>
</evidence>
<evidence type="ECO:0000305" key="2"/>
<feature type="chain" id="PRO_0000216029" description="Chalcone synthase A">
    <location>
        <begin position="1"/>
        <end position="389"/>
    </location>
</feature>
<feature type="active site" evidence="1">
    <location>
        <position position="164"/>
    </location>
</feature>
<feature type="sequence conflict" description="In Ref. 2; CAA32731." evidence="2" ref="2">
    <original>V</original>
    <variation>F</variation>
    <location>
        <position position="128"/>
    </location>
</feature>
<reference key="1">
    <citation type="journal article" date="1986" name="Nucleic Acids Res.">
        <title>Floral tissue of Petunia hybrida (V30) expresses only one member of the chalcone synthase multigene family.</title>
        <authorList>
            <person name="Koes R.E."/>
            <person name="Spelt C.E."/>
            <person name="Reif H.J."/>
            <person name="van den Elzen P.J.M."/>
            <person name="Veltkamp E."/>
            <person name="Mol J.N.M."/>
        </authorList>
    </citation>
    <scope>NUCLEOTIDE SEQUENCE [MRNA]</scope>
    <source>
        <strain>cv. Violet 30</strain>
    </source>
</reference>
<reference key="2">
    <citation type="journal article" date="1989" name="Gene">
        <title>Cloning and molecular characterization of the chalcone synthase multigene family of Petunia hybrida.</title>
        <authorList>
            <person name="Koes R.E."/>
            <person name="Spelt C.E."/>
            <person name="van den Elzen P.J.M."/>
            <person name="Mol J.N.M."/>
        </authorList>
    </citation>
    <scope>NUCLEOTIDE SEQUENCE [GENOMIC DNA]</scope>
    <source>
        <strain>cv. Violet 30</strain>
        <tissue>Leaf</tissue>
    </source>
</reference>
<sequence length="389" mass="42525">MVTVEEYRKAQRAEGPATVMAIGTATPTNCVDQSTYPDYYFRITNSEHKTDLKEKFKRMCEKSMIKKRYMHLTEEILKENPSMCEYMAPSLDARQDIVVVEVPKLGKEAAQKAIKEWGQPKSKITHLVFCTTSGVDMPGCDYQLTKLLGLRPSVKRLMMYQQGCFAGGTVLRLAKDLAENNKGARVLVVCSEITAVTFRGPNDTHLDSLVGQALFGDGAGAIIIGSDPIPGVERPLFELVSAAQTLLPDSHGAIDGHLREVGLTFHLLKDVPGLISKNIEKSLEEAFKPLGISDWNSLFWIAHPGGPAILDQVEIKLGLKPEKLKATRNVLSDYGNMSSACVLFILDEMRKASAKEGLGTTGEGLEWGVLFGFGPGLTVETVVLHSVAT</sequence>
<proteinExistence type="evidence at transcript level"/>
<organism>
    <name type="scientific">Petunia hybrida</name>
    <name type="common">Petunia</name>
    <dbReference type="NCBI Taxonomy" id="4102"/>
    <lineage>
        <taxon>Eukaryota</taxon>
        <taxon>Viridiplantae</taxon>
        <taxon>Streptophyta</taxon>
        <taxon>Embryophyta</taxon>
        <taxon>Tracheophyta</taxon>
        <taxon>Spermatophyta</taxon>
        <taxon>Magnoliopsida</taxon>
        <taxon>eudicotyledons</taxon>
        <taxon>Gunneridae</taxon>
        <taxon>Pentapetalae</taxon>
        <taxon>asterids</taxon>
        <taxon>lamiids</taxon>
        <taxon>Solanales</taxon>
        <taxon>Solanaceae</taxon>
        <taxon>Petunioideae</taxon>
        <taxon>Petunia</taxon>
    </lineage>
</organism>
<comment type="function">
    <text>The primary product of this enzyme is 4,2',4',6'-tetrahydroxychalcone (also termed naringenin-chalcone or chalcone) which can under specific conditions spontaneously isomerize into naringenin.</text>
</comment>
<comment type="catalytic activity">
    <reaction evidence="1">
        <text>(E)-4-coumaroyl-CoA + 3 malonyl-CoA + 3 H(+) = 2',4,4',6'-tetrahydroxychalcone + 3 CO2 + 4 CoA</text>
        <dbReference type="Rhea" id="RHEA:11128"/>
        <dbReference type="ChEBI" id="CHEBI:15378"/>
        <dbReference type="ChEBI" id="CHEBI:15413"/>
        <dbReference type="ChEBI" id="CHEBI:16526"/>
        <dbReference type="ChEBI" id="CHEBI:57287"/>
        <dbReference type="ChEBI" id="CHEBI:57384"/>
        <dbReference type="ChEBI" id="CHEBI:85008"/>
        <dbReference type="EC" id="2.3.1.74"/>
    </reaction>
</comment>
<comment type="pathway">
    <text>Secondary metabolite biosynthesis; flavonoid biosynthesis.</text>
</comment>
<comment type="tissue specificity">
    <text>Major expressed member of the gene family in various floral tissues and in seedlings treated with UV light. It is relatively low expressed in tissue culture material.</text>
</comment>
<comment type="similarity">
    <text evidence="2">Belongs to the thiolase-like superfamily. Chalcone/stilbene synthases family.</text>
</comment>
<accession>P08894</accession>
<gene>
    <name type="primary">CHSA</name>
</gene>
<name>CHSA_PETHY</name>
<protein>
    <recommendedName>
        <fullName>Chalcone synthase A</fullName>
        <ecNumber>2.3.1.74</ecNumber>
    </recommendedName>
    <alternativeName>
        <fullName>Naringenin-chalcone synthase A</fullName>
    </alternativeName>
</protein>
<dbReference type="EC" id="2.3.1.74"/>
<dbReference type="EMBL" id="X04080">
    <property type="protein sequence ID" value="CAA27718.1"/>
    <property type="molecule type" value="mRNA"/>
</dbReference>
<dbReference type="EMBL" id="X14591">
    <property type="protein sequence ID" value="CAA32731.1"/>
    <property type="molecule type" value="Genomic_DNA"/>
</dbReference>
<dbReference type="PIR" id="A23643">
    <property type="entry name" value="SYPJCN"/>
</dbReference>
<dbReference type="PIR" id="JS0308">
    <property type="entry name" value="SYPJCA"/>
</dbReference>
<dbReference type="SMR" id="P08894"/>
<dbReference type="UniPathway" id="UPA00154"/>
<dbReference type="GO" id="GO:0016210">
    <property type="term" value="F:naringenin-chalcone synthase activity"/>
    <property type="evidence" value="ECO:0007669"/>
    <property type="project" value="UniProtKB-EC"/>
</dbReference>
<dbReference type="GO" id="GO:0009813">
    <property type="term" value="P:flavonoid biosynthetic process"/>
    <property type="evidence" value="ECO:0007669"/>
    <property type="project" value="UniProtKB-UniPathway"/>
</dbReference>
<dbReference type="GO" id="GO:0030639">
    <property type="term" value="P:polyketide biosynthetic process"/>
    <property type="evidence" value="ECO:0007669"/>
    <property type="project" value="TreeGrafter"/>
</dbReference>
<dbReference type="CDD" id="cd00831">
    <property type="entry name" value="CHS_like"/>
    <property type="match status" value="1"/>
</dbReference>
<dbReference type="FunFam" id="3.40.47.10:FF:000014">
    <property type="entry name" value="Chalcone synthase 1"/>
    <property type="match status" value="1"/>
</dbReference>
<dbReference type="FunFam" id="3.40.47.10:FF:000025">
    <property type="entry name" value="Chalcone synthase 2"/>
    <property type="match status" value="1"/>
</dbReference>
<dbReference type="Gene3D" id="3.40.47.10">
    <property type="match status" value="2"/>
</dbReference>
<dbReference type="InterPro" id="IPR012328">
    <property type="entry name" value="Chalcone/stilbene_synt_C"/>
</dbReference>
<dbReference type="InterPro" id="IPR001099">
    <property type="entry name" value="Chalcone/stilbene_synt_N"/>
</dbReference>
<dbReference type="InterPro" id="IPR018088">
    <property type="entry name" value="Chalcone/stilbene_synthase_AS"/>
</dbReference>
<dbReference type="InterPro" id="IPR011141">
    <property type="entry name" value="Polyketide_synthase_type-III"/>
</dbReference>
<dbReference type="InterPro" id="IPR016039">
    <property type="entry name" value="Thiolase-like"/>
</dbReference>
<dbReference type="PANTHER" id="PTHR11877:SF80">
    <property type="entry name" value="CHALCONE SYNTHASE 1"/>
    <property type="match status" value="1"/>
</dbReference>
<dbReference type="PANTHER" id="PTHR11877">
    <property type="entry name" value="HYDROXYMETHYLGLUTARYL-COA SYNTHASE"/>
    <property type="match status" value="1"/>
</dbReference>
<dbReference type="Pfam" id="PF02797">
    <property type="entry name" value="Chal_sti_synt_C"/>
    <property type="match status" value="1"/>
</dbReference>
<dbReference type="Pfam" id="PF00195">
    <property type="entry name" value="Chal_sti_synt_N"/>
    <property type="match status" value="1"/>
</dbReference>
<dbReference type="PIRSF" id="PIRSF000451">
    <property type="entry name" value="PKS_III"/>
    <property type="match status" value="1"/>
</dbReference>
<dbReference type="SUPFAM" id="SSF53901">
    <property type="entry name" value="Thiolase-like"/>
    <property type="match status" value="2"/>
</dbReference>
<dbReference type="PROSITE" id="PS00441">
    <property type="entry name" value="CHALCONE_SYNTH"/>
    <property type="match status" value="1"/>
</dbReference>
<keyword id="KW-0012">Acyltransferase</keyword>
<keyword id="KW-0284">Flavonoid biosynthesis</keyword>
<keyword id="KW-0808">Transferase</keyword>